<evidence type="ECO:0000250" key="1"/>
<evidence type="ECO:0000250" key="2">
    <source>
        <dbReference type="UniProtKB" id="Q9WYP7"/>
    </source>
</evidence>
<evidence type="ECO:0000305" key="3"/>
<comment type="function">
    <text evidence="1">Catalyzes the reversible isomerization between hydroxypyruvate and 2-hydroxy-3-oxopropanoate (also termed tartronate semialdehyde).</text>
</comment>
<comment type="catalytic activity">
    <reaction>
        <text>3-hydroxypyruvate = 2-hydroxy-3-oxopropanoate</text>
        <dbReference type="Rhea" id="RHEA:11952"/>
        <dbReference type="ChEBI" id="CHEBI:17180"/>
        <dbReference type="ChEBI" id="CHEBI:57978"/>
        <dbReference type="EC" id="5.3.1.22"/>
    </reaction>
</comment>
<comment type="similarity">
    <text evidence="3">Belongs to the hyi family.</text>
</comment>
<comment type="sequence caution" evidence="3">
    <conflict type="erroneous initiation">
        <sequence resource="EMBL-CDS" id="AAH53111"/>
    </conflict>
    <text>Truncated N-terminus.</text>
</comment>
<reference key="1">
    <citation type="submission" date="2003-06" db="EMBL/GenBank/DDBJ databases">
        <authorList>
            <consortium name="NIH - Zebrafish Gene Collection (ZGC) project"/>
        </authorList>
    </citation>
    <scope>NUCLEOTIDE SEQUENCE [LARGE SCALE MRNA]</scope>
    <source>
        <tissue>Embryo</tissue>
    </source>
</reference>
<dbReference type="EC" id="5.3.1.22"/>
<dbReference type="EMBL" id="BC053111">
    <property type="protein sequence ID" value="AAH53111.1"/>
    <property type="status" value="ALT_INIT"/>
    <property type="molecule type" value="mRNA"/>
</dbReference>
<dbReference type="RefSeq" id="NP_956628.2">
    <property type="nucleotide sequence ID" value="NM_200334.2"/>
</dbReference>
<dbReference type="SMR" id="Q7T3H9"/>
<dbReference type="FunCoup" id="Q7T3H9">
    <property type="interactions" value="333"/>
</dbReference>
<dbReference type="STRING" id="7955.ENSDARP00000131995"/>
<dbReference type="PaxDb" id="7955-ENSDARP00000044088"/>
<dbReference type="Ensembl" id="ENSDART00000158333">
    <property type="protein sequence ID" value="ENSDARP00000131995"/>
    <property type="gene ID" value="ENSDARG00000030166"/>
</dbReference>
<dbReference type="GeneID" id="393305"/>
<dbReference type="KEGG" id="dre:393305"/>
<dbReference type="AGR" id="ZFIN:ZDB-GENE-040426-1273"/>
<dbReference type="CTD" id="81888"/>
<dbReference type="ZFIN" id="ZDB-GENE-040426-1273">
    <property type="gene designation" value="hyi"/>
</dbReference>
<dbReference type="eggNOG" id="KOG4518">
    <property type="taxonomic scope" value="Eukaryota"/>
</dbReference>
<dbReference type="InParanoid" id="Q7T3H9"/>
<dbReference type="OMA" id="CEYRPRA"/>
<dbReference type="OrthoDB" id="4214675at2759"/>
<dbReference type="PhylomeDB" id="Q7T3H9"/>
<dbReference type="PRO" id="PR:Q7T3H9"/>
<dbReference type="Proteomes" id="UP000000437">
    <property type="component" value="Chromosome 6"/>
</dbReference>
<dbReference type="Bgee" id="ENSDARG00000030166">
    <property type="expression patterns" value="Expressed in liver and 26 other cell types or tissues"/>
</dbReference>
<dbReference type="ExpressionAtlas" id="Q7T3H9">
    <property type="expression patterns" value="baseline"/>
</dbReference>
<dbReference type="GO" id="GO:0008903">
    <property type="term" value="F:hydroxypyruvate isomerase activity"/>
    <property type="evidence" value="ECO:0000318"/>
    <property type="project" value="GO_Central"/>
</dbReference>
<dbReference type="GO" id="GO:0046487">
    <property type="term" value="P:glyoxylate metabolic process"/>
    <property type="evidence" value="ECO:0000318"/>
    <property type="project" value="GO_Central"/>
</dbReference>
<dbReference type="FunFam" id="3.20.20.150:FF:000026">
    <property type="entry name" value="Putative hydroxypyruvate isomerase"/>
    <property type="match status" value="1"/>
</dbReference>
<dbReference type="Gene3D" id="3.20.20.150">
    <property type="entry name" value="Divalent-metal-dependent TIM barrel enzymes"/>
    <property type="match status" value="1"/>
</dbReference>
<dbReference type="InterPro" id="IPR026040">
    <property type="entry name" value="HyI-like"/>
</dbReference>
<dbReference type="InterPro" id="IPR050417">
    <property type="entry name" value="Sugar_Epim/Isomerase"/>
</dbReference>
<dbReference type="InterPro" id="IPR036237">
    <property type="entry name" value="Xyl_isomerase-like_sf"/>
</dbReference>
<dbReference type="InterPro" id="IPR013022">
    <property type="entry name" value="Xyl_isomerase-like_TIM-brl"/>
</dbReference>
<dbReference type="PANTHER" id="PTHR43489:SF6">
    <property type="entry name" value="HYDROXYPYRUVATE ISOMERASE-RELATED"/>
    <property type="match status" value="1"/>
</dbReference>
<dbReference type="PANTHER" id="PTHR43489">
    <property type="entry name" value="ISOMERASE"/>
    <property type="match status" value="1"/>
</dbReference>
<dbReference type="Pfam" id="PF01261">
    <property type="entry name" value="AP_endonuc_2"/>
    <property type="match status" value="1"/>
</dbReference>
<dbReference type="PIRSF" id="PIRSF006241">
    <property type="entry name" value="HyI"/>
    <property type="match status" value="1"/>
</dbReference>
<dbReference type="SUPFAM" id="SSF51658">
    <property type="entry name" value="Xylose isomerase-like"/>
    <property type="match status" value="1"/>
</dbReference>
<feature type="chain" id="PRO_0000289243" description="Putative hydroxypyruvate isomerase">
    <location>
        <begin position="1"/>
        <end position="276"/>
    </location>
</feature>
<feature type="active site" description="Proton donor/acceptor" evidence="2">
    <location>
        <position position="150"/>
    </location>
</feature>
<feature type="active site" description="Proton donor/acceptor" evidence="2">
    <location>
        <position position="249"/>
    </location>
</feature>
<name>HYI_DANRE</name>
<gene>
    <name type="primary">hyi</name>
    <name type="ORF">zgc:63850</name>
</gene>
<accession>Q7T3H9</accession>
<protein>
    <recommendedName>
        <fullName>Putative hydroxypyruvate isomerase</fullName>
        <ecNumber>5.3.1.22</ecNumber>
    </recommendedName>
</protein>
<organism>
    <name type="scientific">Danio rerio</name>
    <name type="common">Zebrafish</name>
    <name type="synonym">Brachydanio rerio</name>
    <dbReference type="NCBI Taxonomy" id="7955"/>
    <lineage>
        <taxon>Eukaryota</taxon>
        <taxon>Metazoa</taxon>
        <taxon>Chordata</taxon>
        <taxon>Craniata</taxon>
        <taxon>Vertebrata</taxon>
        <taxon>Euteleostomi</taxon>
        <taxon>Actinopterygii</taxon>
        <taxon>Neopterygii</taxon>
        <taxon>Teleostei</taxon>
        <taxon>Ostariophysi</taxon>
        <taxon>Cypriniformes</taxon>
        <taxon>Danionidae</taxon>
        <taxon>Danioninae</taxon>
        <taxon>Danio</taxon>
    </lineage>
</organism>
<proteinExistence type="evidence at transcript level"/>
<keyword id="KW-0413">Isomerase</keyword>
<keyword id="KW-1185">Reference proteome</keyword>
<sequence length="276" mass="31186">MAPLKFCANISWLFTELPEFPQRMRAAASAGFRAVEAAWLYNTDLKELKTAKEETGLEFVLINTPPGDASAGDLGLAAVPGREQEFRQGLDLAVQYAKALDCTRIHLMAGRVPAGSERCALALQMEDTFVHNLKHAAGVLDKEGLLGLIEPINSRITDPRYFLHSPHQAAEILQRVDHPSIKMQMDIFHWQIMDGNLTHNIRRYLPMTGHIQIAQVPDRHEPDSPGELNFSFIFRLLEELDYQGFIGCEYKPQGSTEAGLEWLRKYWRSRNGGERD</sequence>